<reference key="1">
    <citation type="journal article" date="1990" name="Nucleic Acids Res.">
        <title>Properties of Commelina yellow mottle virus's complete DNA sequence, genomic discontinuities and transcript suggest that it is a pararetrovirus.</title>
        <authorList>
            <person name="Medberry S.L."/>
            <person name="Lockhart Olszewski N.E."/>
        </authorList>
    </citation>
    <scope>NUCLEOTIDE SEQUENCE [GENOMIC DNA]</scope>
</reference>
<organism>
    <name type="scientific">Commelina yellow mottle virus</name>
    <name type="common">CoYMV</name>
    <dbReference type="NCBI Taxonomy" id="10653"/>
    <lineage>
        <taxon>Viruses</taxon>
        <taxon>Riboviria</taxon>
        <taxon>Pararnavirae</taxon>
        <taxon>Artverviricota</taxon>
        <taxon>Revtraviricetes</taxon>
        <taxon>Ortervirales</taxon>
        <taxon>Caulimoviridae</taxon>
        <taxon>Badnavirus</taxon>
        <taxon>Badnavirus maculacommelinae</taxon>
    </lineage>
</organism>
<accession>P19200</accession>
<keyword id="KW-1185">Reference proteome</keyword>
<sequence>MNVWLLKSHTPLGLLPYYSLLDPFCFMNQVDQVKQKLIDWLSSAKKLSEEVIVFTPEVKINLRDLAHNIHIIAHRVALGFKVIYLYLVDIIFPLLKNIQKSQKESSENLQSVLKIVKEQRRSLKQIEDQLSKVQSELAKLREDYLSRRPLSKQDVEELVVRISEQPKFIEKQTEALTEELKLKVEEVAKLIHSFKGMVLN</sequence>
<feature type="chain" id="PRO_0000223037" description="Uncharacterized 23 kDa protein">
    <location>
        <begin position="1"/>
        <end position="200"/>
    </location>
</feature>
<dbReference type="EMBL" id="X52938">
    <property type="protein sequence ID" value="CAA37108.1"/>
    <property type="molecule type" value="Genomic_DNA"/>
</dbReference>
<dbReference type="PIR" id="S11477">
    <property type="entry name" value="S11477"/>
</dbReference>
<dbReference type="RefSeq" id="NP_039818.1">
    <property type="nucleotide sequence ID" value="NC_001343.1"/>
</dbReference>
<dbReference type="SMR" id="P19200"/>
<dbReference type="GeneID" id="1489553"/>
<dbReference type="KEGG" id="vg:1489553"/>
<dbReference type="OrthoDB" id="13145at10239"/>
<dbReference type="Proteomes" id="UP000002243">
    <property type="component" value="Genome"/>
</dbReference>
<dbReference type="InterPro" id="IPR010746">
    <property type="entry name" value="CYMV_Orf1"/>
</dbReference>
<dbReference type="Pfam" id="PF07028">
    <property type="entry name" value="DUF1319"/>
    <property type="match status" value="1"/>
</dbReference>
<proteinExistence type="predicted"/>
<protein>
    <recommendedName>
        <fullName>Uncharacterized 23 kDa protein</fullName>
    </recommendedName>
    <alternativeName>
        <fullName>ORF1</fullName>
    </alternativeName>
</protein>
<organismHost>
    <name type="scientific">Commelina</name>
    <dbReference type="NCBI Taxonomy" id="4743"/>
</organismHost>
<name>YOR1_COYMV</name>